<keyword id="KW-0997">Cell inner membrane</keyword>
<keyword id="KW-1003">Cell membrane</keyword>
<keyword id="KW-0472">Membrane</keyword>
<keyword id="KW-0520">NAD</keyword>
<keyword id="KW-0874">Quinone</keyword>
<keyword id="KW-1278">Translocase</keyword>
<keyword id="KW-0813">Transport</keyword>
<keyword id="KW-0830">Ubiquinone</keyword>
<comment type="function">
    <text evidence="1">NDH-1 shuttles electrons from NADH, via FMN and iron-sulfur (Fe-S) centers, to quinones in the respiratory chain. The immediate electron acceptor for the enzyme in this species is believed to be ubiquinone. Couples the redox reaction to proton translocation (for every two electrons transferred, four hydrogen ions are translocated across the cytoplasmic membrane), and thus conserves the redox energy in a proton gradient.</text>
</comment>
<comment type="catalytic activity">
    <reaction evidence="1">
        <text>a quinone + NADH + 5 H(+)(in) = a quinol + NAD(+) + 4 H(+)(out)</text>
        <dbReference type="Rhea" id="RHEA:57888"/>
        <dbReference type="ChEBI" id="CHEBI:15378"/>
        <dbReference type="ChEBI" id="CHEBI:24646"/>
        <dbReference type="ChEBI" id="CHEBI:57540"/>
        <dbReference type="ChEBI" id="CHEBI:57945"/>
        <dbReference type="ChEBI" id="CHEBI:132124"/>
    </reaction>
</comment>
<comment type="subunit">
    <text evidence="1">NDH-1 is composed of 14 different subunits. Subunits NuoB, C, D, E, F, and G constitute the peripheral sector of the complex.</text>
</comment>
<comment type="subcellular location">
    <subcellularLocation>
        <location evidence="1">Cell inner membrane</location>
        <topology evidence="1">Peripheral membrane protein</topology>
        <orientation evidence="1">Cytoplasmic side</orientation>
    </subcellularLocation>
</comment>
<comment type="similarity">
    <text evidence="1">Belongs to the complex I 30 kDa subunit family.</text>
</comment>
<organism>
    <name type="scientific">Rhodopseudomonas palustris (strain BisB18)</name>
    <dbReference type="NCBI Taxonomy" id="316056"/>
    <lineage>
        <taxon>Bacteria</taxon>
        <taxon>Pseudomonadati</taxon>
        <taxon>Pseudomonadota</taxon>
        <taxon>Alphaproteobacteria</taxon>
        <taxon>Hyphomicrobiales</taxon>
        <taxon>Nitrobacteraceae</taxon>
        <taxon>Rhodopseudomonas</taxon>
    </lineage>
</organism>
<reference key="1">
    <citation type="submission" date="2006-03" db="EMBL/GenBank/DDBJ databases">
        <title>Complete sequence of Rhodopseudomonas palustris BisB18.</title>
        <authorList>
            <consortium name="US DOE Joint Genome Institute"/>
            <person name="Copeland A."/>
            <person name="Lucas S."/>
            <person name="Lapidus A."/>
            <person name="Barry K."/>
            <person name="Detter J.C."/>
            <person name="Glavina del Rio T."/>
            <person name="Hammon N."/>
            <person name="Israni S."/>
            <person name="Dalin E."/>
            <person name="Tice H."/>
            <person name="Pitluck S."/>
            <person name="Chain P."/>
            <person name="Malfatti S."/>
            <person name="Shin M."/>
            <person name="Vergez L."/>
            <person name="Schmutz J."/>
            <person name="Larimer F."/>
            <person name="Land M."/>
            <person name="Hauser L."/>
            <person name="Pelletier D.A."/>
            <person name="Kyrpides N."/>
            <person name="Anderson I."/>
            <person name="Oda Y."/>
            <person name="Harwood C.S."/>
            <person name="Richardson P."/>
        </authorList>
    </citation>
    <scope>NUCLEOTIDE SEQUENCE [LARGE SCALE GENOMIC DNA]</scope>
    <source>
        <strain>BisB18</strain>
    </source>
</reference>
<sequence length="199" mass="22764">MTDLAELGETIKAALPAAVSNASIAFGELTLTVDAAKIVEVVRFLRDDPRCRFISPIDVTAVDYPGRANRFDVVWHFLSPSLNTRIRLRAEASETTQVPSLIDLFPGVDWFEREAYDLYGVIFTGHPDMRRILTDYGFDGHPLRKDFPLSGFVEVRYDDDEKRVVYEPVRLNQEFRKFDFLSPWEGADYPLPGDEKRSE</sequence>
<evidence type="ECO:0000255" key="1">
    <source>
        <dbReference type="HAMAP-Rule" id="MF_01357"/>
    </source>
</evidence>
<accession>Q215I2</accession>
<protein>
    <recommendedName>
        <fullName evidence="1">NADH-quinone oxidoreductase subunit C</fullName>
        <ecNumber evidence="1">7.1.1.-</ecNumber>
    </recommendedName>
    <alternativeName>
        <fullName evidence="1">NADH dehydrogenase I subunit C</fullName>
    </alternativeName>
    <alternativeName>
        <fullName evidence="1">NDH-1 subunit C</fullName>
    </alternativeName>
</protein>
<proteinExistence type="inferred from homology"/>
<dbReference type="EC" id="7.1.1.-" evidence="1"/>
<dbReference type="EMBL" id="CP000301">
    <property type="protein sequence ID" value="ABD87954.1"/>
    <property type="molecule type" value="Genomic_DNA"/>
</dbReference>
<dbReference type="SMR" id="Q215I2"/>
<dbReference type="STRING" id="316056.RPC_2402"/>
<dbReference type="KEGG" id="rpc:RPC_2402"/>
<dbReference type="eggNOG" id="COG0852">
    <property type="taxonomic scope" value="Bacteria"/>
</dbReference>
<dbReference type="HOGENOM" id="CLU_042628_2_1_5"/>
<dbReference type="OrthoDB" id="9803286at2"/>
<dbReference type="GO" id="GO:0005886">
    <property type="term" value="C:plasma membrane"/>
    <property type="evidence" value="ECO:0007669"/>
    <property type="project" value="UniProtKB-SubCell"/>
</dbReference>
<dbReference type="GO" id="GO:0008137">
    <property type="term" value="F:NADH dehydrogenase (ubiquinone) activity"/>
    <property type="evidence" value="ECO:0007669"/>
    <property type="project" value="InterPro"/>
</dbReference>
<dbReference type="GO" id="GO:0050136">
    <property type="term" value="F:NADH:ubiquinone reductase (non-electrogenic) activity"/>
    <property type="evidence" value="ECO:0007669"/>
    <property type="project" value="UniProtKB-UniRule"/>
</dbReference>
<dbReference type="GO" id="GO:0048038">
    <property type="term" value="F:quinone binding"/>
    <property type="evidence" value="ECO:0007669"/>
    <property type="project" value="UniProtKB-KW"/>
</dbReference>
<dbReference type="Gene3D" id="3.30.460.80">
    <property type="entry name" value="NADH:ubiquinone oxidoreductase, 30kDa subunit"/>
    <property type="match status" value="1"/>
</dbReference>
<dbReference type="HAMAP" id="MF_01357">
    <property type="entry name" value="NDH1_NuoC"/>
    <property type="match status" value="1"/>
</dbReference>
<dbReference type="InterPro" id="IPR010218">
    <property type="entry name" value="NADH_DH_suC"/>
</dbReference>
<dbReference type="InterPro" id="IPR037232">
    <property type="entry name" value="NADH_quin_OxRdtase_su_C/D-like"/>
</dbReference>
<dbReference type="InterPro" id="IPR001268">
    <property type="entry name" value="NADH_UbQ_OxRdtase_30kDa_su"/>
</dbReference>
<dbReference type="InterPro" id="IPR020396">
    <property type="entry name" value="NADH_UbQ_OxRdtase_CS"/>
</dbReference>
<dbReference type="NCBIfam" id="TIGR01961">
    <property type="entry name" value="NuoC_fam"/>
    <property type="match status" value="1"/>
</dbReference>
<dbReference type="NCBIfam" id="NF004730">
    <property type="entry name" value="PRK06074.1-1"/>
    <property type="match status" value="1"/>
</dbReference>
<dbReference type="NCBIfam" id="NF004733">
    <property type="entry name" value="PRK06074.1-5"/>
    <property type="match status" value="1"/>
</dbReference>
<dbReference type="PANTHER" id="PTHR10884:SF14">
    <property type="entry name" value="NADH DEHYDROGENASE [UBIQUINONE] IRON-SULFUR PROTEIN 3, MITOCHONDRIAL"/>
    <property type="match status" value="1"/>
</dbReference>
<dbReference type="PANTHER" id="PTHR10884">
    <property type="entry name" value="NADH DEHYDROGENASE UBIQUINONE IRON-SULFUR PROTEIN 3"/>
    <property type="match status" value="1"/>
</dbReference>
<dbReference type="Pfam" id="PF00329">
    <property type="entry name" value="Complex1_30kDa"/>
    <property type="match status" value="1"/>
</dbReference>
<dbReference type="SUPFAM" id="SSF143243">
    <property type="entry name" value="Nqo5-like"/>
    <property type="match status" value="1"/>
</dbReference>
<dbReference type="PROSITE" id="PS00542">
    <property type="entry name" value="COMPLEX1_30K"/>
    <property type="match status" value="1"/>
</dbReference>
<feature type="chain" id="PRO_0000358188" description="NADH-quinone oxidoreductase subunit C">
    <location>
        <begin position="1"/>
        <end position="199"/>
    </location>
</feature>
<name>NUOC_RHOPB</name>
<gene>
    <name evidence="1" type="primary">nuoC</name>
    <name type="ordered locus">RPC_2402</name>
</gene>